<keyword id="KW-0067">ATP-binding</keyword>
<keyword id="KW-0227">DNA damage</keyword>
<keyword id="KW-0234">DNA repair</keyword>
<keyword id="KW-0238">DNA-binding</keyword>
<keyword id="KW-0547">Nucleotide-binding</keyword>
<name>MUTS_STRPI</name>
<proteinExistence type="inferred from homology"/>
<sequence>MAIEKLSPGMQQYVDIKKQYPDAFLLFRMGDFYELFYEDAVNAAQILEISLTSRNKNADNPIPMAGVPYHSAQQYIDVLIEQGYKVAIAEQMEDPKQAVGVVKREVVQVITPGTVVDSSKPDSQNNFLVAIDREGNQFGLAYMDLVTGDFYVTGLLDFTLVCGEIRNLKAREVVLGYDLSEEEEQILSRQMNLVLSYEKESFEDLHLLDLRLATVEQTASSKLLQYVHRTQMRELNHLKPVIRYEIKDFLQMDYATKASLDLVENARSGKKQGSLFWLLDETKTAMGMRLLRSWIHRPLIDKERIVQRQEVVQVFLDHFFERSDLTDSLKGVYDIERLASRVSFGKTNPKDLLQLATTLSSVPRIRAILEGMEQPTLAYLIAQLDAIPELESLISAAIAPEAPHVITDGGIIRTGFDETLDKYRCVLREGTSWIAEIEAKERENSGISTLKIDYNKKDGYYFHVTNSQLGNVPAHFFRKATLKNSERFGTEELARIEGDMLEAREKSANLEYEIFMRIREEVGKYIQRLQTLAQGIATVDVLQSLAVVAETQHLIRPEFGDDSQIDIRKGRHAVVEKVMGAQTYIPNTIQMAEDTSIQLVTGPNMSGKSTYMRQLAMTAVMAQLGSYVPAESAHLPIFDAIFTRIGAADDLVSGQSTFMVEMMEANNAISHATKNSLILFDELGRGTATYDGMALAQSIIEYIHEHIGAKTLFATHYHELTSLESSLQHLVNVHVATLEQDGQVTFLHKIEPGPADKSYGIHVAKIAGLPADLLARADKILTQLENQGTESPPPMRQTSAVTEQISLFDRAEEHPILAELAKLDVYNMTPMQVMNVLVELKQKL</sequence>
<accession>B1I9E5</accession>
<dbReference type="EMBL" id="CP000936">
    <property type="protein sequence ID" value="ACA36032.1"/>
    <property type="molecule type" value="Genomic_DNA"/>
</dbReference>
<dbReference type="RefSeq" id="WP_000963668.1">
    <property type="nucleotide sequence ID" value="NC_010380.1"/>
</dbReference>
<dbReference type="SMR" id="B1I9E5"/>
<dbReference type="KEGG" id="spv:SPH_2264"/>
<dbReference type="HOGENOM" id="CLU_002472_3_1_9"/>
<dbReference type="Proteomes" id="UP000002163">
    <property type="component" value="Chromosome"/>
</dbReference>
<dbReference type="GO" id="GO:0005829">
    <property type="term" value="C:cytosol"/>
    <property type="evidence" value="ECO:0007669"/>
    <property type="project" value="TreeGrafter"/>
</dbReference>
<dbReference type="GO" id="GO:0005524">
    <property type="term" value="F:ATP binding"/>
    <property type="evidence" value="ECO:0007669"/>
    <property type="project" value="UniProtKB-UniRule"/>
</dbReference>
<dbReference type="GO" id="GO:0140664">
    <property type="term" value="F:ATP-dependent DNA damage sensor activity"/>
    <property type="evidence" value="ECO:0007669"/>
    <property type="project" value="InterPro"/>
</dbReference>
<dbReference type="GO" id="GO:0003684">
    <property type="term" value="F:damaged DNA binding"/>
    <property type="evidence" value="ECO:0007669"/>
    <property type="project" value="UniProtKB-UniRule"/>
</dbReference>
<dbReference type="GO" id="GO:0030983">
    <property type="term" value="F:mismatched DNA binding"/>
    <property type="evidence" value="ECO:0007669"/>
    <property type="project" value="InterPro"/>
</dbReference>
<dbReference type="GO" id="GO:0006298">
    <property type="term" value="P:mismatch repair"/>
    <property type="evidence" value="ECO:0007669"/>
    <property type="project" value="UniProtKB-UniRule"/>
</dbReference>
<dbReference type="CDD" id="cd03284">
    <property type="entry name" value="ABC_MutS1"/>
    <property type="match status" value="1"/>
</dbReference>
<dbReference type="FunFam" id="1.10.1420.10:FF:000018">
    <property type="entry name" value="DNA mismatch repair protein MutS"/>
    <property type="match status" value="1"/>
</dbReference>
<dbReference type="FunFam" id="3.30.420.110:FF:000015">
    <property type="entry name" value="DNA mismatch repair protein MutS"/>
    <property type="match status" value="1"/>
</dbReference>
<dbReference type="FunFam" id="3.40.1170.10:FF:000001">
    <property type="entry name" value="DNA mismatch repair protein MutS"/>
    <property type="match status" value="1"/>
</dbReference>
<dbReference type="FunFam" id="3.40.50.300:FF:000896">
    <property type="entry name" value="DNA mismatch repair protein MutS"/>
    <property type="match status" value="1"/>
</dbReference>
<dbReference type="Gene3D" id="1.10.1420.10">
    <property type="match status" value="2"/>
</dbReference>
<dbReference type="Gene3D" id="3.40.1170.10">
    <property type="entry name" value="DNA repair protein MutS, domain I"/>
    <property type="match status" value="1"/>
</dbReference>
<dbReference type="Gene3D" id="3.30.420.110">
    <property type="entry name" value="MutS, connector domain"/>
    <property type="match status" value="1"/>
</dbReference>
<dbReference type="Gene3D" id="3.40.50.300">
    <property type="entry name" value="P-loop containing nucleotide triphosphate hydrolases"/>
    <property type="match status" value="1"/>
</dbReference>
<dbReference type="HAMAP" id="MF_00096">
    <property type="entry name" value="MutS"/>
    <property type="match status" value="1"/>
</dbReference>
<dbReference type="InterPro" id="IPR005748">
    <property type="entry name" value="DNA_mismatch_repair_MutS"/>
</dbReference>
<dbReference type="InterPro" id="IPR007695">
    <property type="entry name" value="DNA_mismatch_repair_MutS-lik_N"/>
</dbReference>
<dbReference type="InterPro" id="IPR017261">
    <property type="entry name" value="DNA_mismatch_repair_MutS/MSH"/>
</dbReference>
<dbReference type="InterPro" id="IPR000432">
    <property type="entry name" value="DNA_mismatch_repair_MutS_C"/>
</dbReference>
<dbReference type="InterPro" id="IPR007861">
    <property type="entry name" value="DNA_mismatch_repair_MutS_clamp"/>
</dbReference>
<dbReference type="InterPro" id="IPR007696">
    <property type="entry name" value="DNA_mismatch_repair_MutS_core"/>
</dbReference>
<dbReference type="InterPro" id="IPR016151">
    <property type="entry name" value="DNA_mismatch_repair_MutS_N"/>
</dbReference>
<dbReference type="InterPro" id="IPR036187">
    <property type="entry name" value="DNA_mismatch_repair_MutS_sf"/>
</dbReference>
<dbReference type="InterPro" id="IPR007860">
    <property type="entry name" value="DNA_mmatch_repair_MutS_con_dom"/>
</dbReference>
<dbReference type="InterPro" id="IPR045076">
    <property type="entry name" value="MutS"/>
</dbReference>
<dbReference type="InterPro" id="IPR036678">
    <property type="entry name" value="MutS_con_dom_sf"/>
</dbReference>
<dbReference type="InterPro" id="IPR027417">
    <property type="entry name" value="P-loop_NTPase"/>
</dbReference>
<dbReference type="NCBIfam" id="TIGR01070">
    <property type="entry name" value="mutS1"/>
    <property type="match status" value="1"/>
</dbReference>
<dbReference type="NCBIfam" id="NF003810">
    <property type="entry name" value="PRK05399.1"/>
    <property type="match status" value="1"/>
</dbReference>
<dbReference type="PANTHER" id="PTHR11361:SF34">
    <property type="entry name" value="DNA MISMATCH REPAIR PROTEIN MSH1, MITOCHONDRIAL"/>
    <property type="match status" value="1"/>
</dbReference>
<dbReference type="PANTHER" id="PTHR11361">
    <property type="entry name" value="DNA MISMATCH REPAIR PROTEIN MUTS FAMILY MEMBER"/>
    <property type="match status" value="1"/>
</dbReference>
<dbReference type="Pfam" id="PF01624">
    <property type="entry name" value="MutS_I"/>
    <property type="match status" value="1"/>
</dbReference>
<dbReference type="Pfam" id="PF05188">
    <property type="entry name" value="MutS_II"/>
    <property type="match status" value="1"/>
</dbReference>
<dbReference type="Pfam" id="PF05192">
    <property type="entry name" value="MutS_III"/>
    <property type="match status" value="1"/>
</dbReference>
<dbReference type="Pfam" id="PF05190">
    <property type="entry name" value="MutS_IV"/>
    <property type="match status" value="1"/>
</dbReference>
<dbReference type="Pfam" id="PF00488">
    <property type="entry name" value="MutS_V"/>
    <property type="match status" value="1"/>
</dbReference>
<dbReference type="PIRSF" id="PIRSF037677">
    <property type="entry name" value="DNA_mis_repair_Msh6"/>
    <property type="match status" value="1"/>
</dbReference>
<dbReference type="SMART" id="SM00534">
    <property type="entry name" value="MUTSac"/>
    <property type="match status" value="1"/>
</dbReference>
<dbReference type="SMART" id="SM00533">
    <property type="entry name" value="MUTSd"/>
    <property type="match status" value="1"/>
</dbReference>
<dbReference type="SUPFAM" id="SSF55271">
    <property type="entry name" value="DNA repair protein MutS, domain I"/>
    <property type="match status" value="1"/>
</dbReference>
<dbReference type="SUPFAM" id="SSF53150">
    <property type="entry name" value="DNA repair protein MutS, domain II"/>
    <property type="match status" value="1"/>
</dbReference>
<dbReference type="SUPFAM" id="SSF48334">
    <property type="entry name" value="DNA repair protein MutS, domain III"/>
    <property type="match status" value="1"/>
</dbReference>
<dbReference type="SUPFAM" id="SSF52540">
    <property type="entry name" value="P-loop containing nucleoside triphosphate hydrolases"/>
    <property type="match status" value="1"/>
</dbReference>
<dbReference type="PROSITE" id="PS00486">
    <property type="entry name" value="DNA_MISMATCH_REPAIR_2"/>
    <property type="match status" value="1"/>
</dbReference>
<feature type="chain" id="PRO_1000093649" description="DNA mismatch repair protein MutS">
    <location>
        <begin position="1"/>
        <end position="844"/>
    </location>
</feature>
<feature type="binding site" evidence="1">
    <location>
        <begin position="602"/>
        <end position="609"/>
    </location>
    <ligand>
        <name>ATP</name>
        <dbReference type="ChEBI" id="CHEBI:30616"/>
    </ligand>
</feature>
<gene>
    <name evidence="1" type="primary">mutS</name>
    <name type="ordered locus">SPH_2264</name>
</gene>
<protein>
    <recommendedName>
        <fullName evidence="1">DNA mismatch repair protein MutS</fullName>
    </recommendedName>
</protein>
<evidence type="ECO:0000255" key="1">
    <source>
        <dbReference type="HAMAP-Rule" id="MF_00096"/>
    </source>
</evidence>
<reference key="1">
    <citation type="journal article" date="2010" name="Genome Biol.">
        <title>Structure and dynamics of the pan-genome of Streptococcus pneumoniae and closely related species.</title>
        <authorList>
            <person name="Donati C."/>
            <person name="Hiller N.L."/>
            <person name="Tettelin H."/>
            <person name="Muzzi A."/>
            <person name="Croucher N.J."/>
            <person name="Angiuoli S.V."/>
            <person name="Oggioni M."/>
            <person name="Dunning Hotopp J.C."/>
            <person name="Hu F.Z."/>
            <person name="Riley D.R."/>
            <person name="Covacci A."/>
            <person name="Mitchell T.J."/>
            <person name="Bentley S.D."/>
            <person name="Kilian M."/>
            <person name="Ehrlich G.D."/>
            <person name="Rappuoli R."/>
            <person name="Moxon E.R."/>
            <person name="Masignani V."/>
        </authorList>
    </citation>
    <scope>NUCLEOTIDE SEQUENCE [LARGE SCALE GENOMIC DNA]</scope>
    <source>
        <strain>Hungary19A-6</strain>
    </source>
</reference>
<organism>
    <name type="scientific">Streptococcus pneumoniae (strain Hungary19A-6)</name>
    <dbReference type="NCBI Taxonomy" id="487214"/>
    <lineage>
        <taxon>Bacteria</taxon>
        <taxon>Bacillati</taxon>
        <taxon>Bacillota</taxon>
        <taxon>Bacilli</taxon>
        <taxon>Lactobacillales</taxon>
        <taxon>Streptococcaceae</taxon>
        <taxon>Streptococcus</taxon>
    </lineage>
</organism>
<comment type="function">
    <text evidence="1">This protein is involved in the repair of mismatches in DNA. It is possible that it carries out the mismatch recognition step. This protein has a weak ATPase activity.</text>
</comment>
<comment type="similarity">
    <text evidence="1">Belongs to the DNA mismatch repair MutS family.</text>
</comment>